<feature type="initiator methionine" description="Removed; by host" evidence="3">
    <location>
        <position position="1"/>
    </location>
</feature>
<feature type="chain" id="PRO_0000079204" description="RING finger protein Z">
    <location>
        <begin position="2"/>
        <end position="72" status="greater than"/>
    </location>
</feature>
<feature type="zinc finger region" description="RING-type; atypical">
    <location>
        <begin position="32"/>
        <end position="68"/>
    </location>
</feature>
<feature type="lipid moiety-binding region" description="N-myristoyl glycine; by host" evidence="2">
    <location>
        <position position="2"/>
    </location>
</feature>
<feature type="non-terminal residue">
    <location>
        <position position="72"/>
    </location>
</feature>
<accession>P19325</accession>
<dbReference type="SMR" id="P19325"/>
<dbReference type="GO" id="GO:0044220">
    <property type="term" value="C:host cell perinuclear region of cytoplasm"/>
    <property type="evidence" value="ECO:0007669"/>
    <property type="project" value="UniProtKB-SubCell"/>
</dbReference>
<dbReference type="GO" id="GO:0020002">
    <property type="term" value="C:host cell plasma membrane"/>
    <property type="evidence" value="ECO:0007669"/>
    <property type="project" value="UniProtKB-SubCell"/>
</dbReference>
<dbReference type="GO" id="GO:0016020">
    <property type="term" value="C:membrane"/>
    <property type="evidence" value="ECO:0007669"/>
    <property type="project" value="UniProtKB-KW"/>
</dbReference>
<dbReference type="GO" id="GO:0044423">
    <property type="term" value="C:virion component"/>
    <property type="evidence" value="ECO:0007669"/>
    <property type="project" value="UniProtKB-KW"/>
</dbReference>
<dbReference type="GO" id="GO:0003723">
    <property type="term" value="F:RNA binding"/>
    <property type="evidence" value="ECO:0007669"/>
    <property type="project" value="InterPro"/>
</dbReference>
<dbReference type="GO" id="GO:0008270">
    <property type="term" value="F:zinc ion binding"/>
    <property type="evidence" value="ECO:0007669"/>
    <property type="project" value="UniProtKB-KW"/>
</dbReference>
<dbReference type="Gene3D" id="3.30.160.310">
    <property type="match status" value="1"/>
</dbReference>
<dbReference type="InterPro" id="IPR038485">
    <property type="entry name" value="Z_RING-type_Znf_sf"/>
</dbReference>
<dbReference type="InterPro" id="IPR003224">
    <property type="entry name" value="Z_RING_Znf"/>
</dbReference>
<dbReference type="Pfam" id="PF03854">
    <property type="entry name" value="zf-P11"/>
    <property type="match status" value="1"/>
</dbReference>
<dbReference type="SUPFAM" id="SSF57850">
    <property type="entry name" value="RING/U-box"/>
    <property type="match status" value="1"/>
</dbReference>
<reference key="1">
    <citation type="journal article" date="1989" name="Virology">
        <title>The completed sequence of lymphocytic choriomeningitis virus reveals a unique RNA structure and a gene for a zinc finger protein.</title>
        <authorList>
            <person name="Salvato M.S."/>
            <person name="Shimomaye E.M."/>
        </authorList>
    </citation>
    <scope>NUCLEOTIDE SEQUENCE [GENOMIC RNA]</scope>
</reference>
<keyword id="KW-1032">Host cell membrane</keyword>
<keyword id="KW-1035">Host cytoplasm</keyword>
<keyword id="KW-1043">Host membrane</keyword>
<keyword id="KW-0945">Host-virus interaction</keyword>
<keyword id="KW-0449">Lipoprotein</keyword>
<keyword id="KW-0472">Membrane</keyword>
<keyword id="KW-0479">Metal-binding</keyword>
<keyword id="KW-0519">Myristate</keyword>
<keyword id="KW-0946">Virion</keyword>
<keyword id="KW-0862">Zinc</keyword>
<keyword id="KW-0863">Zinc-finger</keyword>
<organism>
    <name type="scientific">Lymphocytic choriomeningitis virus (strain Traub)</name>
    <name type="common">LCMV</name>
    <dbReference type="NCBI Taxonomy" id="11626"/>
    <lineage>
        <taxon>Viruses</taxon>
        <taxon>Riboviria</taxon>
        <taxon>Orthornavirae</taxon>
        <taxon>Negarnaviricota</taxon>
        <taxon>Polyploviricotina</taxon>
        <taxon>Ellioviricetes</taxon>
        <taxon>Bunyavirales</taxon>
        <taxon>Arenaviridae</taxon>
        <taxon>Mammarenavirus</taxon>
        <taxon>Mammarenavirus choriomeningitidis</taxon>
    </lineage>
</organism>
<sequence>MGQSKSKEEKGISGTSRAEILPDTTYLGPLNCKSCWQKFDSFSKCHDHYLCRHCLNLLLTSSDRCPLCKYPL</sequence>
<organismHost>
    <name type="scientific">Homo sapiens</name>
    <name type="common">Human</name>
    <dbReference type="NCBI Taxonomy" id="9606"/>
</organismHost>
<organismHost>
    <name type="scientific">Mesocricetus auratus</name>
    <name type="common">Golden hamster</name>
    <dbReference type="NCBI Taxonomy" id="10036"/>
</organismHost>
<organismHost>
    <name type="scientific">Mus musculus</name>
    <name type="common">Mouse</name>
    <dbReference type="NCBI Taxonomy" id="10090"/>
</organismHost>
<name>Z_LYCVT</name>
<protein>
    <recommendedName>
        <fullName>RING finger protein Z</fullName>
        <shortName>Protein Z</shortName>
    </recommendedName>
    <alternativeName>
        <fullName>Zinc-binding protein</fullName>
    </alternativeName>
</protein>
<proteinExistence type="inferred from homology"/>
<evidence type="ECO:0000250" key="1"/>
<evidence type="ECO:0000250" key="2">
    <source>
        <dbReference type="UniProtKB" id="P18541"/>
    </source>
</evidence>
<evidence type="ECO:0000255" key="3"/>
<evidence type="ECO:0000255" key="4">
    <source>
        <dbReference type="HAMAP-Rule" id="MF_04087"/>
    </source>
</evidence>
<evidence type="ECO:0000305" key="5"/>
<gene>
    <name type="primary">Z</name>
</gene>
<comment type="function">
    <text evidence="2 4">Plays a crucial role in virion assembly and budding. Expressed late in the virus life cycle, it acts as an inhibitor of viral transcription and RNA synthesis by interacting with the viral polymerase L. Presumably recruits the NP encapsidated genome to cellular membranes at budding sites via direct interaction with NP. Plays critical roles in the final steps of viral release by interacting with host TSG101, a member of the vacuolar protein-sorting pathway and using other cellular host proteins involved in vesicle formation pathway. The budding of the virus progeny occurs after association of protein Z with the viral glycoprotein complex SSP-GP1-GP2 at the cell periphery, step that requires myristoylation of protein Z. Also selectively represses protein production by associating with host EIF4E (By similarity). In cell-based minigenome assay, has an inhibitory effect on the ribonucleoprotein machinery (vRNP), which is responsible for the replication and transcription of the viral genome (By similarity).</text>
</comment>
<comment type="subunit">
    <text evidence="4">Interacts with protein NP; this interaction probably directs the encapsidated genome to budding sites. Interacts (via RING-type zinc finger) with polymerase L; this interaction inhibits viral transcription and replication, Z partially blocks the product exit tunnel for the releasing nascent RNA product. Interacts with the glycoprotein complex; this interaction plays a role in virion budding. Interacts (via RING-type zinc finger) with host EIF4E; this interaction results in conformational changes of both interacting proteins and reduces EIF4E affinity for its substrate, the 5'-m7 G cap structure. Interacts (via late-budding domain) with host TSG101; this interaction is essential for budding and release of viral particles. Interacts with host RPLP0; this interaction may serve to load ribosome-like particles inside the virion. Interacts with host PML; this interaction induces PML bodies redistribution in the cytoplasm upon viral infection.</text>
</comment>
<comment type="subcellular location">
    <subcellularLocation>
        <location>Virion</location>
    </subcellularLocation>
    <subcellularLocation>
        <location>Host cytoplasm</location>
        <location>Host perinuclear region</location>
    </subcellularLocation>
    <subcellularLocation>
        <location>Host cell membrane</location>
        <topology>Lipid-anchor</topology>
        <orientation>Cytoplasmic side</orientation>
    </subcellularLocation>
    <text evidence="1">Mainly perinuclear. During budding, associates at the inner side of the plasma membrane of infected cells (By similarity).</text>
</comment>
<comment type="domain">
    <text evidence="1">The RING finger domain is essential for the inhibitory activity of protein Z in transcription and RNA replication.</text>
</comment>
<comment type="PTM">
    <text evidence="4">Myristoylation is required for the role of RING finger protein Z in assembly and budding.</text>
</comment>
<comment type="similarity">
    <text evidence="5">Belongs to the arenaviridae Z protein family.</text>
</comment>